<feature type="chain" id="PRO_1000095916" description="N-(5'-phosphoribosyl)anthranilate isomerase">
    <location>
        <begin position="1"/>
        <end position="221"/>
    </location>
</feature>
<dbReference type="EC" id="5.3.1.24" evidence="1"/>
<dbReference type="EMBL" id="CP001099">
    <property type="protein sequence ID" value="ACF11105.1"/>
    <property type="molecule type" value="Genomic_DNA"/>
</dbReference>
<dbReference type="RefSeq" id="WP_012501938.1">
    <property type="nucleotide sequence ID" value="NC_011027.1"/>
</dbReference>
<dbReference type="SMR" id="B3QMF2"/>
<dbReference type="STRING" id="517417.Cpar_0685"/>
<dbReference type="KEGG" id="cpc:Cpar_0685"/>
<dbReference type="eggNOG" id="COG0135">
    <property type="taxonomic scope" value="Bacteria"/>
</dbReference>
<dbReference type="HOGENOM" id="CLU_076364_2_0_10"/>
<dbReference type="OrthoDB" id="9786954at2"/>
<dbReference type="UniPathway" id="UPA00035">
    <property type="reaction ID" value="UER00042"/>
</dbReference>
<dbReference type="Proteomes" id="UP000008811">
    <property type="component" value="Chromosome"/>
</dbReference>
<dbReference type="GO" id="GO:0004640">
    <property type="term" value="F:phosphoribosylanthranilate isomerase activity"/>
    <property type="evidence" value="ECO:0007669"/>
    <property type="project" value="UniProtKB-UniRule"/>
</dbReference>
<dbReference type="GO" id="GO:0000162">
    <property type="term" value="P:L-tryptophan biosynthetic process"/>
    <property type="evidence" value="ECO:0007669"/>
    <property type="project" value="UniProtKB-UniRule"/>
</dbReference>
<dbReference type="CDD" id="cd00405">
    <property type="entry name" value="PRAI"/>
    <property type="match status" value="1"/>
</dbReference>
<dbReference type="Gene3D" id="3.20.20.70">
    <property type="entry name" value="Aldolase class I"/>
    <property type="match status" value="1"/>
</dbReference>
<dbReference type="HAMAP" id="MF_00135">
    <property type="entry name" value="PRAI"/>
    <property type="match status" value="1"/>
</dbReference>
<dbReference type="InterPro" id="IPR013785">
    <property type="entry name" value="Aldolase_TIM"/>
</dbReference>
<dbReference type="InterPro" id="IPR001240">
    <property type="entry name" value="PRAI_dom"/>
</dbReference>
<dbReference type="InterPro" id="IPR011060">
    <property type="entry name" value="RibuloseP-bd_barrel"/>
</dbReference>
<dbReference type="InterPro" id="IPR044643">
    <property type="entry name" value="TrpF_fam"/>
</dbReference>
<dbReference type="PANTHER" id="PTHR42894">
    <property type="entry name" value="N-(5'-PHOSPHORIBOSYL)ANTHRANILATE ISOMERASE"/>
    <property type="match status" value="1"/>
</dbReference>
<dbReference type="PANTHER" id="PTHR42894:SF1">
    <property type="entry name" value="N-(5'-PHOSPHORIBOSYL)ANTHRANILATE ISOMERASE"/>
    <property type="match status" value="1"/>
</dbReference>
<dbReference type="Pfam" id="PF00697">
    <property type="entry name" value="PRAI"/>
    <property type="match status" value="1"/>
</dbReference>
<dbReference type="SUPFAM" id="SSF51366">
    <property type="entry name" value="Ribulose-phoshate binding barrel"/>
    <property type="match status" value="1"/>
</dbReference>
<sequence>MTRIKICGITRAEDALTAALAGADALGFNFSKKSPRLVSPDTAREIIAALPPLVAPVGIFVEQSAEEINELCRYCGLQIAQLHSDEYGAEATMRIHGTKVIRVFRPGPGFSVNEVRTYAKQTGCRGFLFDAFSPEMAGGTGKTIESSTASMLFEQTRDIGWALLAGGLNPENVADAVRLINPWGVDTASGVESAPGIKDARKITSFIQAVREVDRMLTAAD</sequence>
<reference key="1">
    <citation type="submission" date="2008-06" db="EMBL/GenBank/DDBJ databases">
        <title>Complete sequence of Chlorobaculum parvum NCIB 8327.</title>
        <authorList>
            <consortium name="US DOE Joint Genome Institute"/>
            <person name="Lucas S."/>
            <person name="Copeland A."/>
            <person name="Lapidus A."/>
            <person name="Glavina del Rio T."/>
            <person name="Dalin E."/>
            <person name="Tice H."/>
            <person name="Bruce D."/>
            <person name="Goodwin L."/>
            <person name="Pitluck S."/>
            <person name="Schmutz J."/>
            <person name="Larimer F."/>
            <person name="Land M."/>
            <person name="Hauser L."/>
            <person name="Kyrpides N."/>
            <person name="Mikhailova N."/>
            <person name="Zhao F."/>
            <person name="Li T."/>
            <person name="Liu Z."/>
            <person name="Overmann J."/>
            <person name="Bryant D.A."/>
            <person name="Richardson P."/>
        </authorList>
    </citation>
    <scope>NUCLEOTIDE SEQUENCE [LARGE SCALE GENOMIC DNA]</scope>
    <source>
        <strain>DSM 263 / NCIMB 8327</strain>
    </source>
</reference>
<keyword id="KW-0028">Amino-acid biosynthesis</keyword>
<keyword id="KW-0057">Aromatic amino acid biosynthesis</keyword>
<keyword id="KW-0413">Isomerase</keyword>
<keyword id="KW-0822">Tryptophan biosynthesis</keyword>
<comment type="catalytic activity">
    <reaction evidence="1">
        <text>N-(5-phospho-beta-D-ribosyl)anthranilate = 1-(2-carboxyphenylamino)-1-deoxy-D-ribulose 5-phosphate</text>
        <dbReference type="Rhea" id="RHEA:21540"/>
        <dbReference type="ChEBI" id="CHEBI:18277"/>
        <dbReference type="ChEBI" id="CHEBI:58613"/>
        <dbReference type="EC" id="5.3.1.24"/>
    </reaction>
</comment>
<comment type="pathway">
    <text evidence="1">Amino-acid biosynthesis; L-tryptophan biosynthesis; L-tryptophan from chorismate: step 3/5.</text>
</comment>
<comment type="similarity">
    <text evidence="1">Belongs to the TrpF family.</text>
</comment>
<name>TRPF_CHLP8</name>
<accession>B3QMF2</accession>
<proteinExistence type="inferred from homology"/>
<organism>
    <name type="scientific">Chlorobaculum parvum (strain DSM 263 / NCIMB 8327)</name>
    <name type="common">Chlorobium vibrioforme subsp. thiosulfatophilum</name>
    <dbReference type="NCBI Taxonomy" id="517417"/>
    <lineage>
        <taxon>Bacteria</taxon>
        <taxon>Pseudomonadati</taxon>
        <taxon>Chlorobiota</taxon>
        <taxon>Chlorobiia</taxon>
        <taxon>Chlorobiales</taxon>
        <taxon>Chlorobiaceae</taxon>
        <taxon>Chlorobaculum</taxon>
    </lineage>
</organism>
<protein>
    <recommendedName>
        <fullName evidence="1">N-(5'-phosphoribosyl)anthranilate isomerase</fullName>
        <shortName evidence="1">PRAI</shortName>
        <ecNumber evidence="1">5.3.1.24</ecNumber>
    </recommendedName>
</protein>
<gene>
    <name evidence="1" type="primary">trpF</name>
    <name type="ordered locus">Cpar_0685</name>
</gene>
<evidence type="ECO:0000255" key="1">
    <source>
        <dbReference type="HAMAP-Rule" id="MF_00135"/>
    </source>
</evidence>